<sequence>MDKKNEQQEVREENDTSINQESETQVELEEEVVNEECETSSEKTDEKEVDDENVTDINSKLAEKKLQDELDELNDKYQRLQAEYANYRRRTQQEKETIGVFANEKIITELIPVIDSMERALDACEDKEDTMYKGISLVHKQLIDTLVKFGVEEIEAESKEFDPNLHLAVMQESVDGVEANQIVMVLQKGYKLGTKVVRPSMVKVSC</sequence>
<dbReference type="EMBL" id="AM180355">
    <property type="protein sequence ID" value="CAJ69349.1"/>
    <property type="molecule type" value="Genomic_DNA"/>
</dbReference>
<dbReference type="RefSeq" id="WP_004454752.1">
    <property type="nucleotide sequence ID" value="NZ_JAUPES010000003.1"/>
</dbReference>
<dbReference type="RefSeq" id="YP_001088976.1">
    <property type="nucleotide sequence ID" value="NC_009089.1"/>
</dbReference>
<dbReference type="SMR" id="Q182F1"/>
<dbReference type="STRING" id="272563.CD630_24620"/>
<dbReference type="EnsemblBacteria" id="CAJ69349">
    <property type="protein sequence ID" value="CAJ69349"/>
    <property type="gene ID" value="CD630_24620"/>
</dbReference>
<dbReference type="GeneID" id="66354860"/>
<dbReference type="KEGG" id="cdf:CD630_24620"/>
<dbReference type="KEGG" id="pdc:CDIF630_02708"/>
<dbReference type="PATRIC" id="fig|272563.120.peg.2601"/>
<dbReference type="eggNOG" id="COG0576">
    <property type="taxonomic scope" value="Bacteria"/>
</dbReference>
<dbReference type="OrthoDB" id="9812586at2"/>
<dbReference type="PhylomeDB" id="Q182F1"/>
<dbReference type="BioCyc" id="PDIF272563:G12WB-2617-MONOMER"/>
<dbReference type="Proteomes" id="UP000001978">
    <property type="component" value="Chromosome"/>
</dbReference>
<dbReference type="GO" id="GO:0005737">
    <property type="term" value="C:cytoplasm"/>
    <property type="evidence" value="ECO:0007669"/>
    <property type="project" value="UniProtKB-SubCell"/>
</dbReference>
<dbReference type="GO" id="GO:0000774">
    <property type="term" value="F:adenyl-nucleotide exchange factor activity"/>
    <property type="evidence" value="ECO:0007669"/>
    <property type="project" value="InterPro"/>
</dbReference>
<dbReference type="GO" id="GO:0042803">
    <property type="term" value="F:protein homodimerization activity"/>
    <property type="evidence" value="ECO:0007669"/>
    <property type="project" value="InterPro"/>
</dbReference>
<dbReference type="GO" id="GO:0051087">
    <property type="term" value="F:protein-folding chaperone binding"/>
    <property type="evidence" value="ECO:0007669"/>
    <property type="project" value="InterPro"/>
</dbReference>
<dbReference type="GO" id="GO:0051082">
    <property type="term" value="F:unfolded protein binding"/>
    <property type="evidence" value="ECO:0007669"/>
    <property type="project" value="TreeGrafter"/>
</dbReference>
<dbReference type="GO" id="GO:0006457">
    <property type="term" value="P:protein folding"/>
    <property type="evidence" value="ECO:0007669"/>
    <property type="project" value="InterPro"/>
</dbReference>
<dbReference type="CDD" id="cd00446">
    <property type="entry name" value="GrpE"/>
    <property type="match status" value="1"/>
</dbReference>
<dbReference type="FunFam" id="2.30.22.10:FF:000001">
    <property type="entry name" value="Protein GrpE"/>
    <property type="match status" value="1"/>
</dbReference>
<dbReference type="Gene3D" id="3.90.20.20">
    <property type="match status" value="1"/>
</dbReference>
<dbReference type="Gene3D" id="2.30.22.10">
    <property type="entry name" value="Head domain of nucleotide exchange factor GrpE"/>
    <property type="match status" value="1"/>
</dbReference>
<dbReference type="HAMAP" id="MF_01151">
    <property type="entry name" value="GrpE"/>
    <property type="match status" value="1"/>
</dbReference>
<dbReference type="InterPro" id="IPR000740">
    <property type="entry name" value="GrpE"/>
</dbReference>
<dbReference type="InterPro" id="IPR013805">
    <property type="entry name" value="GrpE_coiled_coil"/>
</dbReference>
<dbReference type="InterPro" id="IPR009012">
    <property type="entry name" value="GrpE_head"/>
</dbReference>
<dbReference type="NCBIfam" id="NF010738">
    <property type="entry name" value="PRK14140.1"/>
    <property type="match status" value="1"/>
</dbReference>
<dbReference type="PANTHER" id="PTHR21237">
    <property type="entry name" value="GRPE PROTEIN"/>
    <property type="match status" value="1"/>
</dbReference>
<dbReference type="PANTHER" id="PTHR21237:SF23">
    <property type="entry name" value="GRPE PROTEIN HOMOLOG, MITOCHONDRIAL"/>
    <property type="match status" value="1"/>
</dbReference>
<dbReference type="Pfam" id="PF01025">
    <property type="entry name" value="GrpE"/>
    <property type="match status" value="1"/>
</dbReference>
<dbReference type="PRINTS" id="PR00773">
    <property type="entry name" value="GRPEPROTEIN"/>
</dbReference>
<dbReference type="SUPFAM" id="SSF58014">
    <property type="entry name" value="Coiled-coil domain of nucleotide exchange factor GrpE"/>
    <property type="match status" value="1"/>
</dbReference>
<dbReference type="SUPFAM" id="SSF51064">
    <property type="entry name" value="Head domain of nucleotide exchange factor GrpE"/>
    <property type="match status" value="1"/>
</dbReference>
<gene>
    <name evidence="1" type="primary">grpE</name>
    <name type="ordered locus">CD630_24620</name>
</gene>
<proteinExistence type="inferred from homology"/>
<feature type="chain" id="PRO_1000053569" description="Protein GrpE">
    <location>
        <begin position="1"/>
        <end position="206"/>
    </location>
</feature>
<feature type="region of interest" description="Disordered" evidence="2">
    <location>
        <begin position="1"/>
        <end position="56"/>
    </location>
</feature>
<feature type="compositionally biased region" description="Basic and acidic residues" evidence="2">
    <location>
        <begin position="1"/>
        <end position="14"/>
    </location>
</feature>
<feature type="compositionally biased region" description="Acidic residues" evidence="2">
    <location>
        <begin position="24"/>
        <end position="39"/>
    </location>
</feature>
<evidence type="ECO:0000255" key="1">
    <source>
        <dbReference type="HAMAP-Rule" id="MF_01151"/>
    </source>
</evidence>
<evidence type="ECO:0000256" key="2">
    <source>
        <dbReference type="SAM" id="MobiDB-lite"/>
    </source>
</evidence>
<organism>
    <name type="scientific">Clostridioides difficile (strain 630)</name>
    <name type="common">Peptoclostridium difficile</name>
    <dbReference type="NCBI Taxonomy" id="272563"/>
    <lineage>
        <taxon>Bacteria</taxon>
        <taxon>Bacillati</taxon>
        <taxon>Bacillota</taxon>
        <taxon>Clostridia</taxon>
        <taxon>Peptostreptococcales</taxon>
        <taxon>Peptostreptococcaceae</taxon>
        <taxon>Clostridioides</taxon>
    </lineage>
</organism>
<comment type="function">
    <text evidence="1">Participates actively in the response to hyperosmotic and heat shock by preventing the aggregation of stress-denatured proteins, in association with DnaK and GrpE. It is the nucleotide exchange factor for DnaK and may function as a thermosensor. Unfolded proteins bind initially to DnaJ; upon interaction with the DnaJ-bound protein, DnaK hydrolyzes its bound ATP, resulting in the formation of a stable complex. GrpE releases ADP from DnaK; ATP binding to DnaK triggers the release of the substrate protein, thus completing the reaction cycle. Several rounds of ATP-dependent interactions between DnaJ, DnaK and GrpE are required for fully efficient folding.</text>
</comment>
<comment type="subunit">
    <text evidence="1">Homodimer.</text>
</comment>
<comment type="subcellular location">
    <subcellularLocation>
        <location evidence="1">Cytoplasm</location>
    </subcellularLocation>
</comment>
<comment type="similarity">
    <text evidence="1">Belongs to the GrpE family.</text>
</comment>
<keyword id="KW-0143">Chaperone</keyword>
<keyword id="KW-0963">Cytoplasm</keyword>
<keyword id="KW-1185">Reference proteome</keyword>
<keyword id="KW-0346">Stress response</keyword>
<accession>Q182F1</accession>
<name>GRPE_CLOD6</name>
<reference key="1">
    <citation type="journal article" date="2006" name="Nat. Genet.">
        <title>The multidrug-resistant human pathogen Clostridium difficile has a highly mobile, mosaic genome.</title>
        <authorList>
            <person name="Sebaihia M."/>
            <person name="Wren B.W."/>
            <person name="Mullany P."/>
            <person name="Fairweather N.F."/>
            <person name="Minton N."/>
            <person name="Stabler R."/>
            <person name="Thomson N.R."/>
            <person name="Roberts A.P."/>
            <person name="Cerdeno-Tarraga A.M."/>
            <person name="Wang H."/>
            <person name="Holden M.T.G."/>
            <person name="Wright A."/>
            <person name="Churcher C."/>
            <person name="Quail M.A."/>
            <person name="Baker S."/>
            <person name="Bason N."/>
            <person name="Brooks K."/>
            <person name="Chillingworth T."/>
            <person name="Cronin A."/>
            <person name="Davis P."/>
            <person name="Dowd L."/>
            <person name="Fraser A."/>
            <person name="Feltwell T."/>
            <person name="Hance Z."/>
            <person name="Holroyd S."/>
            <person name="Jagels K."/>
            <person name="Moule S."/>
            <person name="Mungall K."/>
            <person name="Price C."/>
            <person name="Rabbinowitsch E."/>
            <person name="Sharp S."/>
            <person name="Simmonds M."/>
            <person name="Stevens K."/>
            <person name="Unwin L."/>
            <person name="Whithead S."/>
            <person name="Dupuy B."/>
            <person name="Dougan G."/>
            <person name="Barrell B."/>
            <person name="Parkhill J."/>
        </authorList>
    </citation>
    <scope>NUCLEOTIDE SEQUENCE [LARGE SCALE GENOMIC DNA]</scope>
    <source>
        <strain>630</strain>
    </source>
</reference>
<protein>
    <recommendedName>
        <fullName evidence="1">Protein GrpE</fullName>
    </recommendedName>
    <alternativeName>
        <fullName evidence="1">HSP-70 cofactor</fullName>
    </alternativeName>
</protein>